<reference evidence="4" key="1">
    <citation type="journal article" date="2007" name="Nature">
        <title>Evolution of genes and genomes on the Drosophila phylogeny.</title>
        <authorList>
            <consortium name="Drosophila 12 genomes consortium"/>
        </authorList>
    </citation>
    <scope>NUCLEOTIDE SEQUENCE [LARGE SCALE GENOMIC DNA]</scope>
    <source>
        <strain evidence="4">Tucson 15010-1051.87</strain>
    </source>
</reference>
<keyword id="KW-0131">Cell cycle</keyword>
<keyword id="KW-0132">Cell division</keyword>
<keyword id="KW-0137">Centromere</keyword>
<keyword id="KW-0158">Chromosome</keyword>
<keyword id="KW-0175">Coiled coil</keyword>
<keyword id="KW-0995">Kinetochore</keyword>
<keyword id="KW-0469">Meiosis</keyword>
<keyword id="KW-0498">Mitosis</keyword>
<keyword id="KW-0539">Nucleus</keyword>
<keyword id="KW-1185">Reference proteome</keyword>
<protein>
    <recommendedName>
        <fullName evidence="2">Kinetochore protein Spc25</fullName>
    </recommendedName>
</protein>
<name>SPC25_DROVI</name>
<evidence type="ECO:0000250" key="1">
    <source>
        <dbReference type="UniProtKB" id="Q9HBM1"/>
    </source>
</evidence>
<evidence type="ECO:0000250" key="2">
    <source>
        <dbReference type="UniProtKB" id="Q9V3V7"/>
    </source>
</evidence>
<evidence type="ECO:0000255" key="3"/>
<evidence type="ECO:0000312" key="4">
    <source>
        <dbReference type="EMBL" id="EDW59321.1"/>
    </source>
</evidence>
<gene>
    <name evidence="2" type="primary">Spc25</name>
    <name type="ORF">GJ10343</name>
</gene>
<dbReference type="EMBL" id="CH940652">
    <property type="protein sequence ID" value="EDW59321.1"/>
    <property type="molecule type" value="Genomic_DNA"/>
</dbReference>
<dbReference type="RefSeq" id="XP_002056209.1">
    <property type="nucleotide sequence ID" value="XM_002056173.4"/>
</dbReference>
<dbReference type="SMR" id="B4M3W0"/>
<dbReference type="FunCoup" id="B4M3W0">
    <property type="interactions" value="55"/>
</dbReference>
<dbReference type="STRING" id="7244.B4M3W0"/>
<dbReference type="EnsemblMetazoa" id="FBtr0226268">
    <property type="protein sequence ID" value="FBpp0224760"/>
    <property type="gene ID" value="FBgn0197629"/>
</dbReference>
<dbReference type="EnsemblMetazoa" id="XM_002056173.3">
    <property type="protein sequence ID" value="XP_002056209.1"/>
    <property type="gene ID" value="LOC6632413"/>
</dbReference>
<dbReference type="GeneID" id="6632413"/>
<dbReference type="KEGG" id="dvi:6632413"/>
<dbReference type="CTD" id="57405"/>
<dbReference type="eggNOG" id="ENOG502RVT8">
    <property type="taxonomic scope" value="Eukaryota"/>
</dbReference>
<dbReference type="HOGENOM" id="CLU_1246541_0_0_1"/>
<dbReference type="InParanoid" id="B4M3W0"/>
<dbReference type="OMA" id="NELMECM"/>
<dbReference type="OrthoDB" id="8006210at2759"/>
<dbReference type="PhylomeDB" id="B4M3W0"/>
<dbReference type="Proteomes" id="UP000008792">
    <property type="component" value="Unassembled WGS sequence"/>
</dbReference>
<dbReference type="GO" id="GO:0031262">
    <property type="term" value="C:Ndc80 complex"/>
    <property type="evidence" value="ECO:0000250"/>
    <property type="project" value="UniProtKB"/>
</dbReference>
<dbReference type="GO" id="GO:0005634">
    <property type="term" value="C:nucleus"/>
    <property type="evidence" value="ECO:0007669"/>
    <property type="project" value="UniProtKB-SubCell"/>
</dbReference>
<dbReference type="GO" id="GO:0051301">
    <property type="term" value="P:cell division"/>
    <property type="evidence" value="ECO:0007669"/>
    <property type="project" value="UniProtKB-KW"/>
</dbReference>
<dbReference type="GO" id="GO:0051311">
    <property type="term" value="P:meiotic metaphase chromosome alignment"/>
    <property type="evidence" value="ECO:0000250"/>
    <property type="project" value="UniProtKB"/>
</dbReference>
<dbReference type="GO" id="GO:0000212">
    <property type="term" value="P:meiotic spindle organization"/>
    <property type="evidence" value="ECO:0000250"/>
    <property type="project" value="UniProtKB"/>
</dbReference>
<dbReference type="GO" id="GO:0007080">
    <property type="term" value="P:mitotic metaphase chromosome alignment"/>
    <property type="evidence" value="ECO:0000250"/>
    <property type="project" value="UniProtKB"/>
</dbReference>
<proteinExistence type="inferred from homology"/>
<feature type="chain" id="PRO_0000392428" description="Kinetochore protein Spc25">
    <location>
        <begin position="1"/>
        <end position="210"/>
    </location>
</feature>
<feature type="coiled-coil region" evidence="3">
    <location>
        <begin position="42"/>
        <end position="106"/>
    </location>
</feature>
<sequence>MSNQFNTRKRLMAMLANEMRLEQEENAIAKQSAKFHSKFATTMENIKRQQHESKKLNTLLNQRRDEVEKRNALKNAVRDKLAEEEQHCAEMQAQLGKKKQERDKLIACAHILSEAANTYINRKALPERVKGVAVSPDNGQWIPFDFNAHDRQGLAALWTQVNRSSRNINKWRQLSSVGNSSMPAPSGKENANVSMTSVIEIDLTSPPSQK</sequence>
<accession>B4M3W0</accession>
<comment type="function">
    <text evidence="1 2">Acts as a component of the essential kinetochore-associated Ndc80 complex, which is required for chromosome segregation and spindle checkpoint activity during meiosis and mitosis. Required for kinetochore integrity and the organization of stable microtubule binding sites in the outer plate of the kinetochore. Participates in SAC signaling that responds specifically to disruptions in spindle microtubule dynamics. The NDC80 complex synergistically enhances the affinity of the SKA1 complex for microtubules and may allow the NDC80 complex to track depolymerizing microtubules.</text>
</comment>
<comment type="subunit">
    <text evidence="2">Component of the Ndc80 complex, which is composed of Ndc80, Nuf2 and Spc25.</text>
</comment>
<comment type="subcellular location">
    <subcellularLocation>
        <location evidence="2">Nucleus</location>
    </subcellularLocation>
    <subcellularLocation>
        <location evidence="2">Chromosome</location>
        <location evidence="2">Centromere</location>
        <location evidence="2">Kinetochore</location>
    </subcellularLocation>
</comment>
<comment type="similarity">
    <text evidence="3">Belongs to the SPC25 family.</text>
</comment>
<organism>
    <name type="scientific">Drosophila virilis</name>
    <name type="common">Fruit fly</name>
    <dbReference type="NCBI Taxonomy" id="7244"/>
    <lineage>
        <taxon>Eukaryota</taxon>
        <taxon>Metazoa</taxon>
        <taxon>Ecdysozoa</taxon>
        <taxon>Arthropoda</taxon>
        <taxon>Hexapoda</taxon>
        <taxon>Insecta</taxon>
        <taxon>Pterygota</taxon>
        <taxon>Neoptera</taxon>
        <taxon>Endopterygota</taxon>
        <taxon>Diptera</taxon>
        <taxon>Brachycera</taxon>
        <taxon>Muscomorpha</taxon>
        <taxon>Ephydroidea</taxon>
        <taxon>Drosophilidae</taxon>
        <taxon>Drosophila</taxon>
    </lineage>
</organism>